<proteinExistence type="inferred from homology"/>
<keyword id="KW-1185">Reference proteome</keyword>
<keyword id="KW-0687">Ribonucleoprotein</keyword>
<keyword id="KW-0689">Ribosomal protein</keyword>
<keyword id="KW-0694">RNA-binding</keyword>
<keyword id="KW-0699">rRNA-binding</keyword>
<feature type="chain" id="PRO_0000236626" description="Large ribosomal subunit protein bL9">
    <location>
        <begin position="1"/>
        <end position="209"/>
    </location>
</feature>
<feature type="region of interest" description="Disordered" evidence="2">
    <location>
        <begin position="169"/>
        <end position="209"/>
    </location>
</feature>
<feature type="compositionally biased region" description="Acidic residues" evidence="2">
    <location>
        <begin position="189"/>
        <end position="209"/>
    </location>
</feature>
<accession>Q5NN59</accession>
<dbReference type="EMBL" id="AE008692">
    <property type="protein sequence ID" value="AAV89851.1"/>
    <property type="molecule type" value="Genomic_DNA"/>
</dbReference>
<dbReference type="RefSeq" id="WP_011241044.1">
    <property type="nucleotide sequence ID" value="NZ_CP035711.1"/>
</dbReference>
<dbReference type="SMR" id="Q5NN59"/>
<dbReference type="STRING" id="264203.ZMO1227"/>
<dbReference type="GeneID" id="79903653"/>
<dbReference type="KEGG" id="zmo:ZMO1227"/>
<dbReference type="eggNOG" id="COG0359">
    <property type="taxonomic scope" value="Bacteria"/>
</dbReference>
<dbReference type="HOGENOM" id="CLU_078938_1_0_5"/>
<dbReference type="Proteomes" id="UP000001173">
    <property type="component" value="Chromosome"/>
</dbReference>
<dbReference type="GO" id="GO:1990904">
    <property type="term" value="C:ribonucleoprotein complex"/>
    <property type="evidence" value="ECO:0007669"/>
    <property type="project" value="UniProtKB-KW"/>
</dbReference>
<dbReference type="GO" id="GO:0005840">
    <property type="term" value="C:ribosome"/>
    <property type="evidence" value="ECO:0007669"/>
    <property type="project" value="UniProtKB-KW"/>
</dbReference>
<dbReference type="GO" id="GO:0019843">
    <property type="term" value="F:rRNA binding"/>
    <property type="evidence" value="ECO:0007669"/>
    <property type="project" value="UniProtKB-UniRule"/>
</dbReference>
<dbReference type="GO" id="GO:0003735">
    <property type="term" value="F:structural constituent of ribosome"/>
    <property type="evidence" value="ECO:0007669"/>
    <property type="project" value="InterPro"/>
</dbReference>
<dbReference type="GO" id="GO:0006412">
    <property type="term" value="P:translation"/>
    <property type="evidence" value="ECO:0007669"/>
    <property type="project" value="UniProtKB-UniRule"/>
</dbReference>
<dbReference type="Gene3D" id="3.10.430.100">
    <property type="entry name" value="Ribosomal protein L9, C-terminal domain"/>
    <property type="match status" value="1"/>
</dbReference>
<dbReference type="Gene3D" id="3.40.5.10">
    <property type="entry name" value="Ribosomal protein L9, N-terminal domain"/>
    <property type="match status" value="1"/>
</dbReference>
<dbReference type="HAMAP" id="MF_00503">
    <property type="entry name" value="Ribosomal_bL9"/>
    <property type="match status" value="1"/>
</dbReference>
<dbReference type="InterPro" id="IPR000244">
    <property type="entry name" value="Ribosomal_bL9"/>
</dbReference>
<dbReference type="InterPro" id="IPR009027">
    <property type="entry name" value="Ribosomal_bL9/RNase_H1_N"/>
</dbReference>
<dbReference type="InterPro" id="IPR020594">
    <property type="entry name" value="Ribosomal_bL9_bac/chp"/>
</dbReference>
<dbReference type="InterPro" id="IPR020069">
    <property type="entry name" value="Ribosomal_bL9_C"/>
</dbReference>
<dbReference type="InterPro" id="IPR036791">
    <property type="entry name" value="Ribosomal_bL9_C_sf"/>
</dbReference>
<dbReference type="InterPro" id="IPR020070">
    <property type="entry name" value="Ribosomal_bL9_N"/>
</dbReference>
<dbReference type="InterPro" id="IPR036935">
    <property type="entry name" value="Ribosomal_bL9_N_sf"/>
</dbReference>
<dbReference type="NCBIfam" id="TIGR00158">
    <property type="entry name" value="L9"/>
    <property type="match status" value="1"/>
</dbReference>
<dbReference type="PANTHER" id="PTHR21368">
    <property type="entry name" value="50S RIBOSOMAL PROTEIN L9"/>
    <property type="match status" value="1"/>
</dbReference>
<dbReference type="Pfam" id="PF03948">
    <property type="entry name" value="Ribosomal_L9_C"/>
    <property type="match status" value="1"/>
</dbReference>
<dbReference type="Pfam" id="PF01281">
    <property type="entry name" value="Ribosomal_L9_N"/>
    <property type="match status" value="1"/>
</dbReference>
<dbReference type="SUPFAM" id="SSF55658">
    <property type="entry name" value="L9 N-domain-like"/>
    <property type="match status" value="1"/>
</dbReference>
<dbReference type="SUPFAM" id="SSF55653">
    <property type="entry name" value="Ribosomal protein L9 C-domain"/>
    <property type="match status" value="1"/>
</dbReference>
<dbReference type="PROSITE" id="PS00651">
    <property type="entry name" value="RIBOSOMAL_L9"/>
    <property type="match status" value="1"/>
</dbReference>
<protein>
    <recommendedName>
        <fullName evidence="1">Large ribosomal subunit protein bL9</fullName>
    </recommendedName>
    <alternativeName>
        <fullName evidence="3">50S ribosomal protein L9</fullName>
    </alternativeName>
</protein>
<gene>
    <name evidence="1" type="primary">rplI</name>
    <name type="ordered locus">ZMO1227</name>
</gene>
<reference key="1">
    <citation type="journal article" date="2005" name="Nat. Biotechnol.">
        <title>The genome sequence of the ethanologenic bacterium Zymomonas mobilis ZM4.</title>
        <authorList>
            <person name="Seo J.-S."/>
            <person name="Chong H."/>
            <person name="Park H.S."/>
            <person name="Yoon K.-O."/>
            <person name="Jung C."/>
            <person name="Kim J.J."/>
            <person name="Hong J.H."/>
            <person name="Kim H."/>
            <person name="Kim J.-H."/>
            <person name="Kil J.-I."/>
            <person name="Park C.J."/>
            <person name="Oh H.-M."/>
            <person name="Lee J.-S."/>
            <person name="Jin S.-J."/>
            <person name="Um H.-W."/>
            <person name="Lee H.-J."/>
            <person name="Oh S.-J."/>
            <person name="Kim J.Y."/>
            <person name="Kang H.L."/>
            <person name="Lee S.Y."/>
            <person name="Lee K.J."/>
            <person name="Kang H.S."/>
        </authorList>
    </citation>
    <scope>NUCLEOTIDE SEQUENCE [LARGE SCALE GENOMIC DNA]</scope>
    <source>
        <strain>ATCC 31821 / ZM4 / CP4</strain>
    </source>
</reference>
<organism>
    <name type="scientific">Zymomonas mobilis subsp. mobilis (strain ATCC 31821 / ZM4 / CP4)</name>
    <dbReference type="NCBI Taxonomy" id="264203"/>
    <lineage>
        <taxon>Bacteria</taxon>
        <taxon>Pseudomonadati</taxon>
        <taxon>Pseudomonadota</taxon>
        <taxon>Alphaproteobacteria</taxon>
        <taxon>Sphingomonadales</taxon>
        <taxon>Zymomonadaceae</taxon>
        <taxon>Zymomonas</taxon>
    </lineage>
</organism>
<evidence type="ECO:0000255" key="1">
    <source>
        <dbReference type="HAMAP-Rule" id="MF_00503"/>
    </source>
</evidence>
<evidence type="ECO:0000256" key="2">
    <source>
        <dbReference type="SAM" id="MobiDB-lite"/>
    </source>
</evidence>
<evidence type="ECO:0000305" key="3"/>
<comment type="function">
    <text evidence="1">Binds to the 23S rRNA.</text>
</comment>
<comment type="similarity">
    <text evidence="1">Belongs to the bacterial ribosomal protein bL9 family.</text>
</comment>
<name>RL9_ZYMMO</name>
<sequence length="209" mass="22802">MDVILLERIEKLGHIGDVVAVKNGYARNFLLPRKKALRANEANRKIFEANRAQIEADNAARRTDAEKESEVVNGLTVTLIRQASNTGHLYGSVSARDLADAIVEAKPEAKVAKNQIVLDRPIKSIGISEVRVVLHPEVAVKIKVNVARSPEEAELQAEGVDVMNQMFERDGASFTEDYDPNAEPGLATEAEEAVADADDNAETNSEESL</sequence>